<dbReference type="EC" id="4.2.1.17" evidence="1"/>
<dbReference type="EC" id="5.1.2.3" evidence="1"/>
<dbReference type="EC" id="1.1.1.35" evidence="1"/>
<dbReference type="EMBL" id="AE017340">
    <property type="protein sequence ID" value="AAV81833.1"/>
    <property type="molecule type" value="Genomic_DNA"/>
</dbReference>
<dbReference type="RefSeq" id="WP_011234244.1">
    <property type="nucleotide sequence ID" value="NC_006512.1"/>
</dbReference>
<dbReference type="SMR" id="Q5QXM1"/>
<dbReference type="STRING" id="283942.IL0993"/>
<dbReference type="GeneID" id="41336155"/>
<dbReference type="KEGG" id="ilo:IL0993"/>
<dbReference type="eggNOG" id="COG1024">
    <property type="taxonomic scope" value="Bacteria"/>
</dbReference>
<dbReference type="eggNOG" id="COG1250">
    <property type="taxonomic scope" value="Bacteria"/>
</dbReference>
<dbReference type="HOGENOM" id="CLU_009834_16_1_6"/>
<dbReference type="OrthoDB" id="5389341at2"/>
<dbReference type="UniPathway" id="UPA00659"/>
<dbReference type="Proteomes" id="UP000001171">
    <property type="component" value="Chromosome"/>
</dbReference>
<dbReference type="GO" id="GO:0005737">
    <property type="term" value="C:cytoplasm"/>
    <property type="evidence" value="ECO:0007669"/>
    <property type="project" value="UniProtKB-SubCell"/>
</dbReference>
<dbReference type="GO" id="GO:0008692">
    <property type="term" value="F:3-hydroxybutyryl-CoA epimerase activity"/>
    <property type="evidence" value="ECO:0007669"/>
    <property type="project" value="UniProtKB-UniRule"/>
</dbReference>
<dbReference type="GO" id="GO:0004300">
    <property type="term" value="F:enoyl-CoA hydratase activity"/>
    <property type="evidence" value="ECO:0007669"/>
    <property type="project" value="UniProtKB-UniRule"/>
</dbReference>
<dbReference type="GO" id="GO:0016509">
    <property type="term" value="F:long-chain-3-hydroxyacyl-CoA dehydrogenase activity"/>
    <property type="evidence" value="ECO:0007669"/>
    <property type="project" value="TreeGrafter"/>
</dbReference>
<dbReference type="GO" id="GO:0070403">
    <property type="term" value="F:NAD+ binding"/>
    <property type="evidence" value="ECO:0007669"/>
    <property type="project" value="InterPro"/>
</dbReference>
<dbReference type="GO" id="GO:0006635">
    <property type="term" value="P:fatty acid beta-oxidation"/>
    <property type="evidence" value="ECO:0007669"/>
    <property type="project" value="UniProtKB-UniRule"/>
</dbReference>
<dbReference type="CDD" id="cd06558">
    <property type="entry name" value="crotonase-like"/>
    <property type="match status" value="1"/>
</dbReference>
<dbReference type="FunFam" id="3.90.226.10:FF:000011">
    <property type="entry name" value="Fatty acid oxidation complex subunit alpha"/>
    <property type="match status" value="1"/>
</dbReference>
<dbReference type="FunFam" id="3.40.50.720:FF:000009">
    <property type="entry name" value="Fatty oxidation complex, alpha subunit"/>
    <property type="match status" value="1"/>
</dbReference>
<dbReference type="Gene3D" id="1.10.1040.50">
    <property type="match status" value="1"/>
</dbReference>
<dbReference type="Gene3D" id="3.90.226.10">
    <property type="entry name" value="2-enoyl-CoA Hydratase, Chain A, domain 1"/>
    <property type="match status" value="1"/>
</dbReference>
<dbReference type="Gene3D" id="3.40.50.720">
    <property type="entry name" value="NAD(P)-binding Rossmann-like Domain"/>
    <property type="match status" value="1"/>
</dbReference>
<dbReference type="HAMAP" id="MF_01617">
    <property type="entry name" value="FadJ"/>
    <property type="match status" value="1"/>
</dbReference>
<dbReference type="InterPro" id="IPR006180">
    <property type="entry name" value="3-OHacyl-CoA_DH_CS"/>
</dbReference>
<dbReference type="InterPro" id="IPR006176">
    <property type="entry name" value="3-OHacyl-CoA_DH_NAD-bd"/>
</dbReference>
<dbReference type="InterPro" id="IPR006108">
    <property type="entry name" value="3HC_DH_C"/>
</dbReference>
<dbReference type="InterPro" id="IPR008927">
    <property type="entry name" value="6-PGluconate_DH-like_C_sf"/>
</dbReference>
<dbReference type="InterPro" id="IPR029045">
    <property type="entry name" value="ClpP/crotonase-like_dom_sf"/>
</dbReference>
<dbReference type="InterPro" id="IPR018376">
    <property type="entry name" value="Enoyl-CoA_hyd/isom_CS"/>
</dbReference>
<dbReference type="InterPro" id="IPR001753">
    <property type="entry name" value="Enoyl-CoA_hydra/iso"/>
</dbReference>
<dbReference type="InterPro" id="IPR050136">
    <property type="entry name" value="FA_oxidation_alpha_subunit"/>
</dbReference>
<dbReference type="InterPro" id="IPR012802">
    <property type="entry name" value="FadJ"/>
</dbReference>
<dbReference type="InterPro" id="IPR036291">
    <property type="entry name" value="NAD(P)-bd_dom_sf"/>
</dbReference>
<dbReference type="NCBIfam" id="TIGR02440">
    <property type="entry name" value="FadJ"/>
    <property type="match status" value="1"/>
</dbReference>
<dbReference type="NCBIfam" id="NF008363">
    <property type="entry name" value="PRK11154.1"/>
    <property type="match status" value="1"/>
</dbReference>
<dbReference type="PANTHER" id="PTHR43612">
    <property type="entry name" value="TRIFUNCTIONAL ENZYME SUBUNIT ALPHA"/>
    <property type="match status" value="1"/>
</dbReference>
<dbReference type="PANTHER" id="PTHR43612:SF3">
    <property type="entry name" value="TRIFUNCTIONAL ENZYME SUBUNIT ALPHA, MITOCHONDRIAL"/>
    <property type="match status" value="1"/>
</dbReference>
<dbReference type="Pfam" id="PF00725">
    <property type="entry name" value="3HCDH"/>
    <property type="match status" value="2"/>
</dbReference>
<dbReference type="Pfam" id="PF02737">
    <property type="entry name" value="3HCDH_N"/>
    <property type="match status" value="1"/>
</dbReference>
<dbReference type="Pfam" id="PF00378">
    <property type="entry name" value="ECH_1"/>
    <property type="match status" value="1"/>
</dbReference>
<dbReference type="SUPFAM" id="SSF48179">
    <property type="entry name" value="6-phosphogluconate dehydrogenase C-terminal domain-like"/>
    <property type="match status" value="2"/>
</dbReference>
<dbReference type="SUPFAM" id="SSF52096">
    <property type="entry name" value="ClpP/crotonase"/>
    <property type="match status" value="1"/>
</dbReference>
<dbReference type="SUPFAM" id="SSF51735">
    <property type="entry name" value="NAD(P)-binding Rossmann-fold domains"/>
    <property type="match status" value="1"/>
</dbReference>
<dbReference type="PROSITE" id="PS00067">
    <property type="entry name" value="3HCDH"/>
    <property type="match status" value="1"/>
</dbReference>
<dbReference type="PROSITE" id="PS00166">
    <property type="entry name" value="ENOYL_COA_HYDRATASE"/>
    <property type="match status" value="1"/>
</dbReference>
<organism>
    <name type="scientific">Idiomarina loihiensis (strain ATCC BAA-735 / DSM 15497 / L2-TR)</name>
    <dbReference type="NCBI Taxonomy" id="283942"/>
    <lineage>
        <taxon>Bacteria</taxon>
        <taxon>Pseudomonadati</taxon>
        <taxon>Pseudomonadota</taxon>
        <taxon>Gammaproteobacteria</taxon>
        <taxon>Alteromonadales</taxon>
        <taxon>Idiomarinaceae</taxon>
        <taxon>Idiomarina</taxon>
    </lineage>
</organism>
<keyword id="KW-0963">Cytoplasm</keyword>
<keyword id="KW-0276">Fatty acid metabolism</keyword>
<keyword id="KW-0413">Isomerase</keyword>
<keyword id="KW-0442">Lipid degradation</keyword>
<keyword id="KW-0443">Lipid metabolism</keyword>
<keyword id="KW-0456">Lyase</keyword>
<keyword id="KW-0511">Multifunctional enzyme</keyword>
<keyword id="KW-0520">NAD</keyword>
<keyword id="KW-0560">Oxidoreductase</keyword>
<keyword id="KW-1185">Reference proteome</keyword>
<sequence length="708" mass="76994">MSQDKAFTMEVRDDGVAVITIDVPGESMNTLKDSFAEEVGSLMNRLESDDSVKGVVFISGKPGSFIAGADINMIDGCENAVDAESLARKGQAMFDRIEQLNVPVVAAINGACLGGGLELAMACHVRVCTDNSKTALGLPEVKLGLLPGSGGTQRLPELVGVQQGLTMILTGKELRAKQALKAGLVTEVVPQSILLDVAVEHALKRKPKSTKPPLKGISKVLEATKFGRDIIFKKASEQAQKKAQGNYPAIDKIIQTVREGVERGREAGLDKEARSFGELAMTPESYQLRQIFFATTEMKKETGADGVKPDSVKRVGVLGGGLMGGGIAYVTAAKAGIPARIKDIAEDGIRHALHYSYERLDKKVKRRHMRRAELEKTMLMLSGSLDYSGFERTDVVIEAVFEDLNLKQKMVADVEEHADESTIFATNTSSLPITQIAAKAKRPEQVIGLHYFSPVDKMPLAEIITHPGTSDKTIATTVSLAKKQGKTPIVVKDGAGFYVNRILAPYMNEAARLLLAGEPIEHIDKTLVKFGFPVGPITLLDEVGIDVAAKVAPVLVKELGDRFEAPEAFEKLIDDDRKGKKNQKGFYQYGKSVKGKPVDTSVYSLLDIDPNESKSADEIIDICLLPMLNEAAYCLQEEIIRSPRDGDIGAIFGIGFPPFLGGPFRYMDSQGLETIVNKLEKLAAERGERYTPAPLLKQMLENGWNFYQ</sequence>
<name>FADJ_IDILO</name>
<reference key="1">
    <citation type="journal article" date="2004" name="Proc. Natl. Acad. Sci. U.S.A.">
        <title>Genome sequence of the deep-sea gamma-proteobacterium Idiomarina loihiensis reveals amino acid fermentation as a source of carbon and energy.</title>
        <authorList>
            <person name="Hou S."/>
            <person name="Saw J.H."/>
            <person name="Lee K.S."/>
            <person name="Freitas T.A."/>
            <person name="Belisle C."/>
            <person name="Kawarabayasi Y."/>
            <person name="Donachie S.P."/>
            <person name="Pikina A."/>
            <person name="Galperin M.Y."/>
            <person name="Koonin E.V."/>
            <person name="Makarova K.S."/>
            <person name="Omelchenko M.V."/>
            <person name="Sorokin A."/>
            <person name="Wolf Y.I."/>
            <person name="Li Q.X."/>
            <person name="Keum Y.S."/>
            <person name="Campbell S."/>
            <person name="Denery J."/>
            <person name="Aizawa S."/>
            <person name="Shibata S."/>
            <person name="Malahoff A."/>
            <person name="Alam M."/>
        </authorList>
    </citation>
    <scope>NUCLEOTIDE SEQUENCE [LARGE SCALE GENOMIC DNA]</scope>
    <source>
        <strain>ATCC BAA-735 / DSM 15497 / L2-TR</strain>
    </source>
</reference>
<proteinExistence type="inferred from homology"/>
<feature type="chain" id="PRO_0000109301" description="Fatty acid oxidation complex subunit alpha">
    <location>
        <begin position="1"/>
        <end position="708"/>
    </location>
</feature>
<feature type="region of interest" description="Enoyl-CoA hydratase" evidence="1">
    <location>
        <begin position="1"/>
        <end position="190"/>
    </location>
</feature>
<feature type="region of interest" description="3-hydroxyacyl-CoA dehydrogenase" evidence="1">
    <location>
        <begin position="310"/>
        <end position="708"/>
    </location>
</feature>
<feature type="site" description="Important for catalytic activity" evidence="1">
    <location>
        <position position="118"/>
    </location>
</feature>
<feature type="site" description="Important for catalytic activity" evidence="1">
    <location>
        <position position="140"/>
    </location>
</feature>
<comment type="function">
    <text evidence="1">Catalyzes the formation of a hydroxyacyl-CoA by addition of water on enoyl-CoA. Also exhibits 3-hydroxyacyl-CoA epimerase and 3-hydroxyacyl-CoA dehydrogenase activities.</text>
</comment>
<comment type="catalytic activity">
    <reaction evidence="1">
        <text>a (3S)-3-hydroxyacyl-CoA = a (2E)-enoyl-CoA + H2O</text>
        <dbReference type="Rhea" id="RHEA:16105"/>
        <dbReference type="ChEBI" id="CHEBI:15377"/>
        <dbReference type="ChEBI" id="CHEBI:57318"/>
        <dbReference type="ChEBI" id="CHEBI:58856"/>
        <dbReference type="EC" id="4.2.1.17"/>
    </reaction>
</comment>
<comment type="catalytic activity">
    <reaction evidence="1">
        <text>a 4-saturated-(3S)-3-hydroxyacyl-CoA = a (3E)-enoyl-CoA + H2O</text>
        <dbReference type="Rhea" id="RHEA:20724"/>
        <dbReference type="ChEBI" id="CHEBI:15377"/>
        <dbReference type="ChEBI" id="CHEBI:58521"/>
        <dbReference type="ChEBI" id="CHEBI:137480"/>
        <dbReference type="EC" id="4.2.1.17"/>
    </reaction>
</comment>
<comment type="catalytic activity">
    <reaction evidence="1">
        <text>a (3S)-3-hydroxyacyl-CoA + NAD(+) = a 3-oxoacyl-CoA + NADH + H(+)</text>
        <dbReference type="Rhea" id="RHEA:22432"/>
        <dbReference type="ChEBI" id="CHEBI:15378"/>
        <dbReference type="ChEBI" id="CHEBI:57318"/>
        <dbReference type="ChEBI" id="CHEBI:57540"/>
        <dbReference type="ChEBI" id="CHEBI:57945"/>
        <dbReference type="ChEBI" id="CHEBI:90726"/>
        <dbReference type="EC" id="1.1.1.35"/>
    </reaction>
</comment>
<comment type="catalytic activity">
    <reaction evidence="1">
        <text>(3S)-3-hydroxybutanoyl-CoA = (3R)-3-hydroxybutanoyl-CoA</text>
        <dbReference type="Rhea" id="RHEA:21760"/>
        <dbReference type="ChEBI" id="CHEBI:57315"/>
        <dbReference type="ChEBI" id="CHEBI:57316"/>
        <dbReference type="EC" id="5.1.2.3"/>
    </reaction>
</comment>
<comment type="pathway">
    <text evidence="1">Lipid metabolism; fatty acid beta-oxidation.</text>
</comment>
<comment type="subunit">
    <text evidence="1">Heterotetramer of two alpha chains (FadJ) and two beta chains (FadI).</text>
</comment>
<comment type="subcellular location">
    <subcellularLocation>
        <location evidence="1">Cytoplasm</location>
    </subcellularLocation>
</comment>
<comment type="similarity">
    <text evidence="1">In the N-terminal section; belongs to the enoyl-CoA hydratase/isomerase family.</text>
</comment>
<comment type="similarity">
    <text evidence="1">In the central section; belongs to the 3-hydroxyacyl-CoA dehydrogenase family.</text>
</comment>
<evidence type="ECO:0000255" key="1">
    <source>
        <dbReference type="HAMAP-Rule" id="MF_01617"/>
    </source>
</evidence>
<accession>Q5QXM1</accession>
<protein>
    <recommendedName>
        <fullName evidence="1">Fatty acid oxidation complex subunit alpha</fullName>
    </recommendedName>
    <domain>
        <recommendedName>
            <fullName evidence="1">Enoyl-CoA hydratase/3-hydroxybutyryl-CoA epimerase</fullName>
            <ecNumber evidence="1">4.2.1.17</ecNumber>
            <ecNumber evidence="1">5.1.2.3</ecNumber>
        </recommendedName>
    </domain>
    <domain>
        <recommendedName>
            <fullName evidence="1">3-hydroxyacyl-CoA dehydrogenase</fullName>
            <ecNumber evidence="1">1.1.1.35</ecNumber>
        </recommendedName>
    </domain>
</protein>
<gene>
    <name evidence="1" type="primary">fadJ</name>
    <name type="ordered locus">IL0993</name>
</gene>